<organism>
    <name type="scientific">Pectobacterium carotovorum subsp. carotovorum</name>
    <name type="common">Erwinia carotovora subsp. carotovora</name>
    <dbReference type="NCBI Taxonomy" id="555"/>
    <lineage>
        <taxon>Bacteria</taxon>
        <taxon>Pseudomonadati</taxon>
        <taxon>Pseudomonadota</taxon>
        <taxon>Gammaproteobacteria</taxon>
        <taxon>Enterobacterales</taxon>
        <taxon>Pectobacteriaceae</taxon>
        <taxon>Pectobacterium</taxon>
    </lineage>
</organism>
<proteinExistence type="inferred from homology"/>
<dbReference type="EMBL" id="X70049">
    <property type="protein sequence ID" value="CAA49647.1"/>
    <property type="molecule type" value="Genomic_DNA"/>
</dbReference>
<dbReference type="PIR" id="S32860">
    <property type="entry name" value="S32860"/>
</dbReference>
<dbReference type="SMR" id="P31705"/>
<dbReference type="GO" id="GO:0005886">
    <property type="term" value="C:plasma membrane"/>
    <property type="evidence" value="ECO:0007669"/>
    <property type="project" value="UniProtKB-SubCell"/>
</dbReference>
<dbReference type="GO" id="GO:0015627">
    <property type="term" value="C:type II protein secretion system complex"/>
    <property type="evidence" value="ECO:0007669"/>
    <property type="project" value="InterPro"/>
</dbReference>
<dbReference type="GO" id="GO:0046872">
    <property type="term" value="F:metal ion binding"/>
    <property type="evidence" value="ECO:0007669"/>
    <property type="project" value="UniProtKB-KW"/>
</dbReference>
<dbReference type="GO" id="GO:0015628">
    <property type="term" value="P:protein secretion by the type II secretion system"/>
    <property type="evidence" value="ECO:0007669"/>
    <property type="project" value="InterPro"/>
</dbReference>
<dbReference type="FunFam" id="1.20.81.30:FF:000001">
    <property type="entry name" value="Type II secretion system protein F"/>
    <property type="match status" value="2"/>
</dbReference>
<dbReference type="Gene3D" id="1.20.81.30">
    <property type="entry name" value="Type II secretion system (T2SS), domain F"/>
    <property type="match status" value="2"/>
</dbReference>
<dbReference type="InterPro" id="IPR003004">
    <property type="entry name" value="GspF/PilC"/>
</dbReference>
<dbReference type="InterPro" id="IPR011850">
    <property type="entry name" value="T2SS_GspF"/>
</dbReference>
<dbReference type="InterPro" id="IPR001992">
    <property type="entry name" value="T2SS_GspF/T4SS_PilC_CS"/>
</dbReference>
<dbReference type="InterPro" id="IPR018076">
    <property type="entry name" value="T2SS_GspF_dom"/>
</dbReference>
<dbReference type="InterPro" id="IPR042094">
    <property type="entry name" value="T2SS_GspF_sf"/>
</dbReference>
<dbReference type="NCBIfam" id="TIGR02120">
    <property type="entry name" value="GspF"/>
    <property type="match status" value="1"/>
</dbReference>
<dbReference type="PANTHER" id="PTHR30012">
    <property type="entry name" value="GENERAL SECRETION PATHWAY PROTEIN"/>
    <property type="match status" value="1"/>
</dbReference>
<dbReference type="PANTHER" id="PTHR30012:SF0">
    <property type="entry name" value="TYPE II SECRETION SYSTEM PROTEIN F-RELATED"/>
    <property type="match status" value="1"/>
</dbReference>
<dbReference type="Pfam" id="PF00482">
    <property type="entry name" value="T2SSF"/>
    <property type="match status" value="2"/>
</dbReference>
<dbReference type="PRINTS" id="PR00812">
    <property type="entry name" value="BCTERIALGSPF"/>
</dbReference>
<dbReference type="PROSITE" id="PS00874">
    <property type="entry name" value="T2SP_F"/>
    <property type="match status" value="1"/>
</dbReference>
<keyword id="KW-0106">Calcium</keyword>
<keyword id="KW-0997">Cell inner membrane</keyword>
<keyword id="KW-1003">Cell membrane</keyword>
<keyword id="KW-0472">Membrane</keyword>
<keyword id="KW-0479">Metal-binding</keyword>
<keyword id="KW-0653">Protein transport</keyword>
<keyword id="KW-0812">Transmembrane</keyword>
<keyword id="KW-1133">Transmembrane helix</keyword>
<keyword id="KW-0813">Transport</keyword>
<sequence length="408" mass="45162">MAQYHYQALDAQGKKCRGTQEADSARQARQLLRERGLVPLSVDENRGDQQKSGSTGLSLRRKIRLSTSDLALLTRQLATLVAASMPLEEALDAVAKQSEKPHLSQLMAAVRSKVMEGHSLADAMKCFPGSFERLYCAMVAAGETSGHLDAVLNRLADYTEQRQQMRSRIQQAMIYPCVLTVVAIAVVSILLSVVVPKVVEQFIHMKQALPLSTRVLMGMSDAVRTFGPWMLLALLAGFMAFRVMLRQEKRRVSFHRRLLHLPLIGRIARGLNTARYARTLSILNASAVPLLQAMRISGDVMSNDYARHRLSLATDAVREGVSLHKALEQTALFPPMMRHMIASGERSGELDSMLERAADNQDREFSSQMTLALGLFEPLLVVSMAAVVLFIVLAILQPILQLNTLMSS</sequence>
<protein>
    <recommendedName>
        <fullName>Type II secretion system protein F</fullName>
        <shortName>T2SS protein F</shortName>
    </recommendedName>
    <alternativeName>
        <fullName>General secretion pathway protein F</fullName>
    </alternativeName>
    <alternativeName>
        <fullName>Pectic enzymes secretion protein OutF</fullName>
    </alternativeName>
</protein>
<name>GSPF_PECCC</name>
<gene>
    <name type="primary">outF</name>
</gene>
<feature type="chain" id="PRO_0000207833" description="Type II secretion system protein F">
    <location>
        <begin position="1"/>
        <end position="408"/>
    </location>
</feature>
<feature type="topological domain" description="Cytoplasmic" evidence="3">
    <location>
        <begin position="1"/>
        <end position="173"/>
    </location>
</feature>
<feature type="transmembrane region" description="Helical" evidence="5">
    <location>
        <begin position="174"/>
        <end position="194"/>
    </location>
</feature>
<feature type="topological domain" description="Periplasmic" evidence="3">
    <location>
        <begin position="195"/>
        <end position="224"/>
    </location>
</feature>
<feature type="transmembrane region" description="Helical" evidence="5">
    <location>
        <begin position="225"/>
        <end position="245"/>
    </location>
</feature>
<feature type="topological domain" description="Cytoplasmic" evidence="3">
    <location>
        <begin position="246"/>
        <end position="379"/>
    </location>
</feature>
<feature type="transmembrane region" description="Helical" evidence="5">
    <location>
        <begin position="380"/>
        <end position="400"/>
    </location>
</feature>
<feature type="topological domain" description="Periplasmic" evidence="1">
    <location>
        <begin position="401"/>
        <end position="408"/>
    </location>
</feature>
<feature type="region of interest" description="Disordered" evidence="6">
    <location>
        <begin position="38"/>
        <end position="58"/>
    </location>
</feature>
<feature type="binding site" evidence="2">
    <location>
        <position position="99"/>
    </location>
    <ligand>
        <name>Ca(2+)</name>
        <dbReference type="ChEBI" id="CHEBI:29108"/>
    </ligand>
</feature>
<feature type="binding site" evidence="2">
    <location>
        <position position="153"/>
    </location>
    <ligand>
        <name>Ca(2+)</name>
        <dbReference type="ChEBI" id="CHEBI:29108"/>
    </ligand>
</feature>
<feature type="binding site" evidence="2">
    <location>
        <position position="157"/>
    </location>
    <ligand>
        <name>Ca(2+)</name>
        <dbReference type="ChEBI" id="CHEBI:29108"/>
    </ligand>
</feature>
<accession>P31705</accession>
<evidence type="ECO:0000250" key="1">
    <source>
        <dbReference type="UniProtKB" id="P41441"/>
    </source>
</evidence>
<evidence type="ECO:0000250" key="2">
    <source>
        <dbReference type="UniProtKB" id="P45780"/>
    </source>
</evidence>
<evidence type="ECO:0000250" key="3">
    <source>
        <dbReference type="UniProtKB" id="Q00513"/>
    </source>
</evidence>
<evidence type="ECO:0000250" key="4">
    <source>
        <dbReference type="UniProtKB" id="Q00514"/>
    </source>
</evidence>
<evidence type="ECO:0000255" key="5"/>
<evidence type="ECO:0000256" key="6">
    <source>
        <dbReference type="SAM" id="MobiDB-lite"/>
    </source>
</evidence>
<evidence type="ECO:0000305" key="7"/>
<comment type="function">
    <text evidence="4">Component of the type II secretion system inner membrane complex required for the energy-dependent secretion of extracellular factors such as proteases and toxins from the periplasm.</text>
</comment>
<comment type="subunit">
    <text evidence="2 3 4">Type II secretion system is composed of four main components: the outer membrane complex, the inner membrane complex, the cytoplasmic secretion ATPase and the periplasm-spanning pseudopilus (By similarity). Homodimer (By similarity). Interacts with OutE and OutL components (By similarity).</text>
</comment>
<comment type="subcellular location">
    <subcellularLocation>
        <location evidence="7">Cell inner membrane</location>
        <topology evidence="7">Multi-pass membrane protein</topology>
    </subcellularLocation>
</comment>
<comment type="similarity">
    <text evidence="7">Belongs to the GSP F family.</text>
</comment>
<reference key="1">
    <citation type="journal article" date="1993" name="Mol. Microbiol.">
        <title>Molecular cloning and characterization of 13 out genes from Erwinia carotovora subspecies carotovora: genes encoding members of a general secretion pathway (GSP) widespread in Gram-negative bacteria.</title>
        <authorList>
            <person name="Reeves P.J."/>
            <person name="Whitcombe D."/>
            <person name="Wharam S."/>
            <person name="Gibson M."/>
            <person name="Allison G."/>
            <person name="Bunce N."/>
            <person name="Barallon R."/>
            <person name="Douglas P."/>
            <person name="Mulholland V."/>
            <person name="Stevens S."/>
            <person name="Walker S."/>
            <person name="Salmond G.P.C."/>
        </authorList>
    </citation>
    <scope>NUCLEOTIDE SEQUENCE [GENOMIC DNA]</scope>
    <source>
        <strain>SCRI 193</strain>
    </source>
</reference>